<sequence>MAEPITKEQPPPPAPDPNSTYPPPSDFDSISIPPLDDHFSDQTPIGELMSDLGFPDGEFELTFDGMDDLYFPAENESFLIPINTSNQEQFGDFTPESESSGISGDCIVPKDADKTITTSGCINRESPRDSDDRCSGADHNLDLPTPLSSQGSGNCGSDVSEATNESSPKSRNVAVDQKVKVEEAATTTTSITKRKKEIDEDLTDESRNSKYRRSGEDADASAVTGEEDEKKRARLMRNRESAQLSRQRKKHYVEELEEKVRNMHSTITDLNGKISYFMAENATLRQQLGGNGMCPPHLPPPPMGMYPPMAPMPYPWMPCPPYMVKQQGSQVPLIPIPRLKPQNTLGTSKAKKSESKKSEAKTKKVASISFLGLLFCLFLFGALAPIVNVNYGGISGAFYGNYRSNYITDQIYSQHRDRVLDTSRSGAGTGVSNSNGMHRGRDSDRGARKNISATESSVTPGNGSEPLVASLFVPRNDKLVKIDGNLIINSILASEKAVASRKASESKERKADLMISKDYTPALPLPDVGRTEELAKHLYRSKAEKQKALSSGSADTLKDQVKTKAANGEMQQWFREGVAGPMFSSGMCTEVFQFDVSSTSGAIIPAATNVSAEHGKNTTDTHKQQNRRILRGLPIPLPGSDFNLTKEHQRNSSSKEIKPASSMVVSVLVDPREGGDGDIDGMIGGPKSLSRVFVVVLLDSAKYVTYSCVLPRSGAPHLVTT</sequence>
<keyword id="KW-0010">Activator</keyword>
<keyword id="KW-0238">DNA-binding</keyword>
<keyword id="KW-0256">Endoplasmic reticulum</keyword>
<keyword id="KW-0325">Glycoprotein</keyword>
<keyword id="KW-0333">Golgi apparatus</keyword>
<keyword id="KW-0472">Membrane</keyword>
<keyword id="KW-0539">Nucleus</keyword>
<keyword id="KW-1185">Reference proteome</keyword>
<keyword id="KW-0346">Stress response</keyword>
<keyword id="KW-0804">Transcription</keyword>
<keyword id="KW-0805">Transcription regulation</keyword>
<keyword id="KW-0812">Transmembrane</keyword>
<keyword id="KW-1133">Transmembrane helix</keyword>
<comment type="function">
    <text evidence="6 8">Transcriptional activator involved in salt and osmotic stress responses. Functions as a stress sensor and transducer in a signaling pathway that resembles an ER stress response. Following salt stress, BZIP17 is cleaved by SBT6.1 (S1P) and S2P at the C-terminus and the N-terminal bZIP component is translocated to the nucleus, where it activates the expression of salt stress response genes (PubMed:17662035). Functions as a stress sensor and transducer in ER stress signaling pathway. ER stress induces proteolysis of BZIP17 by SBT6.1 (S1P) and S2P, and the N-terminal bZIP component is translocated to the nucleus, where it activates the expression and production of ER chaperones, as well as protein involved in brassinosteroid (BR) signaling, which is required for stress acclimation and growth (PubMed:20876872).</text>
</comment>
<comment type="subunit">
    <text evidence="7">Interacts with BZIP28.</text>
</comment>
<comment type="subcellular location">
    <subcellularLocation>
        <location evidence="8 11">Endoplasmic reticulum membrane</location>
        <topology evidence="2">Single-pass membrane protein</topology>
    </subcellularLocation>
    <subcellularLocation>
        <location evidence="12">Golgi apparatus membrane</location>
        <topology evidence="2">Single-pass membrane protein</topology>
    </subcellularLocation>
    <subcellularLocation>
        <location evidence="6 8">Nucleus</location>
    </subcellularLocation>
    <text evidence="6 8">Translocates to the nucleus following salt treatment, heat shock or tunicamycin treatment (ER stress) (PubMed:17662035, PubMed:20876872). Relocation of BZIP17 from ER to the nucleus occurs through the Golgi and is S2P-dependent (PubMed:20876872).</text>
</comment>
<comment type="disruption phenotype">
    <text evidence="6">No visible phenotype under normal growth conditions, but mutant plants have increased sensitivity to salt-induced osmotic stress.</text>
</comment>
<comment type="similarity">
    <text evidence="10">Belongs to the bZIP family.</text>
</comment>
<name>BZP17_ARATH</name>
<protein>
    <recommendedName>
        <fullName evidence="9">bZIP transcription factor 17</fullName>
        <shortName evidence="9">AtbZIP17</shortName>
    </recommendedName>
</protein>
<proteinExistence type="evidence at protein level"/>
<dbReference type="EMBL" id="AC002409">
    <property type="protein sequence ID" value="AAB86455.2"/>
    <property type="molecule type" value="Genomic_DNA"/>
</dbReference>
<dbReference type="EMBL" id="CP002685">
    <property type="protein sequence ID" value="AEC09905.1"/>
    <property type="molecule type" value="Genomic_DNA"/>
</dbReference>
<dbReference type="EMBL" id="AY136295">
    <property type="protein sequence ID" value="AAM96961.1"/>
    <property type="molecule type" value="mRNA"/>
</dbReference>
<dbReference type="EMBL" id="BT000408">
    <property type="protein sequence ID" value="AAN15727.1"/>
    <property type="molecule type" value="mRNA"/>
</dbReference>
<dbReference type="PIR" id="T00759">
    <property type="entry name" value="T00759"/>
</dbReference>
<dbReference type="RefSeq" id="NP_565946.1">
    <property type="nucleotide sequence ID" value="NM_129659.3"/>
</dbReference>
<dbReference type="SMR" id="O22208"/>
<dbReference type="FunCoup" id="O22208">
    <property type="interactions" value="2151"/>
</dbReference>
<dbReference type="STRING" id="3702.O22208"/>
<dbReference type="GlyCosmos" id="O22208">
    <property type="glycosylation" value="6 sites, No reported glycans"/>
</dbReference>
<dbReference type="GlyGen" id="O22208">
    <property type="glycosylation" value="7 sites"/>
</dbReference>
<dbReference type="iPTMnet" id="O22208"/>
<dbReference type="PaxDb" id="3702-AT2G40950.1"/>
<dbReference type="ProteomicsDB" id="240513"/>
<dbReference type="EnsemblPlants" id="AT2G40950.1">
    <property type="protein sequence ID" value="AT2G40950.1"/>
    <property type="gene ID" value="AT2G40950"/>
</dbReference>
<dbReference type="GeneID" id="818694"/>
<dbReference type="Gramene" id="AT2G40950.1">
    <property type="protein sequence ID" value="AT2G40950.1"/>
    <property type="gene ID" value="AT2G40950"/>
</dbReference>
<dbReference type="KEGG" id="ath:AT2G40950"/>
<dbReference type="Araport" id="AT2G40950"/>
<dbReference type="TAIR" id="AT2G40950">
    <property type="gene designation" value="BZIP17"/>
</dbReference>
<dbReference type="eggNOG" id="ENOG502QQUV">
    <property type="taxonomic scope" value="Eukaryota"/>
</dbReference>
<dbReference type="HOGENOM" id="CLU_018118_1_0_1"/>
<dbReference type="InParanoid" id="O22208"/>
<dbReference type="OMA" id="NGMCPPH"/>
<dbReference type="PhylomeDB" id="O22208"/>
<dbReference type="PRO" id="PR:O22208"/>
<dbReference type="Proteomes" id="UP000006548">
    <property type="component" value="Chromosome 2"/>
</dbReference>
<dbReference type="ExpressionAtlas" id="O22208">
    <property type="expression patterns" value="baseline and differential"/>
</dbReference>
<dbReference type="GO" id="GO:0005783">
    <property type="term" value="C:endoplasmic reticulum"/>
    <property type="evidence" value="ECO:0000314"/>
    <property type="project" value="TAIR"/>
</dbReference>
<dbReference type="GO" id="GO:0005789">
    <property type="term" value="C:endoplasmic reticulum membrane"/>
    <property type="evidence" value="ECO:0007669"/>
    <property type="project" value="UniProtKB-SubCell"/>
</dbReference>
<dbReference type="GO" id="GO:0000139">
    <property type="term" value="C:Golgi membrane"/>
    <property type="evidence" value="ECO:0007669"/>
    <property type="project" value="UniProtKB-SubCell"/>
</dbReference>
<dbReference type="GO" id="GO:0005634">
    <property type="term" value="C:nucleus"/>
    <property type="evidence" value="ECO:0000314"/>
    <property type="project" value="TAIR"/>
</dbReference>
<dbReference type="GO" id="GO:0003700">
    <property type="term" value="F:DNA-binding transcription factor activity"/>
    <property type="evidence" value="ECO:0000250"/>
    <property type="project" value="TAIR"/>
</dbReference>
<dbReference type="GO" id="GO:0043565">
    <property type="term" value="F:sequence-specific DNA binding"/>
    <property type="evidence" value="ECO:0000353"/>
    <property type="project" value="TAIR"/>
</dbReference>
<dbReference type="GO" id="GO:0000976">
    <property type="term" value="F:transcription cis-regulatory region binding"/>
    <property type="evidence" value="ECO:0000353"/>
    <property type="project" value="TAIR"/>
</dbReference>
<dbReference type="GO" id="GO:0042538">
    <property type="term" value="P:hyperosmotic salinity response"/>
    <property type="evidence" value="ECO:0000315"/>
    <property type="project" value="TAIR"/>
</dbReference>
<dbReference type="GO" id="GO:0045893">
    <property type="term" value="P:positive regulation of DNA-templated transcription"/>
    <property type="evidence" value="ECO:0000314"/>
    <property type="project" value="TAIR"/>
</dbReference>
<dbReference type="GO" id="GO:0006355">
    <property type="term" value="P:regulation of DNA-templated transcription"/>
    <property type="evidence" value="ECO:0000314"/>
    <property type="project" value="TAIR"/>
</dbReference>
<dbReference type="CDD" id="cd14704">
    <property type="entry name" value="bZIP_HY5-like"/>
    <property type="match status" value="1"/>
</dbReference>
<dbReference type="FunFam" id="1.20.5.170:FF:000085">
    <property type="entry name" value="bZIP transcription factor 49"/>
    <property type="match status" value="1"/>
</dbReference>
<dbReference type="Gene3D" id="1.20.5.170">
    <property type="match status" value="1"/>
</dbReference>
<dbReference type="InterPro" id="IPR004827">
    <property type="entry name" value="bZIP"/>
</dbReference>
<dbReference type="InterPro" id="IPR046347">
    <property type="entry name" value="bZIP_sf"/>
</dbReference>
<dbReference type="PANTHER" id="PTHR47416">
    <property type="entry name" value="BASIC-LEUCINE ZIPPER TRANSCRIPTION FACTOR F-RELATED"/>
    <property type="match status" value="1"/>
</dbReference>
<dbReference type="PANTHER" id="PTHR47416:SF3">
    <property type="entry name" value="BZIP TRANSCRIPTION FACTOR 17-RELATED"/>
    <property type="match status" value="1"/>
</dbReference>
<dbReference type="Pfam" id="PF00170">
    <property type="entry name" value="bZIP_1"/>
    <property type="match status" value="1"/>
</dbReference>
<dbReference type="SMART" id="SM00338">
    <property type="entry name" value="BRLZ"/>
    <property type="match status" value="1"/>
</dbReference>
<dbReference type="SUPFAM" id="SSF57959">
    <property type="entry name" value="Leucine zipper domain"/>
    <property type="match status" value="1"/>
</dbReference>
<dbReference type="PROSITE" id="PS50217">
    <property type="entry name" value="BZIP"/>
    <property type="match status" value="1"/>
</dbReference>
<organism>
    <name type="scientific">Arabidopsis thaliana</name>
    <name type="common">Mouse-ear cress</name>
    <dbReference type="NCBI Taxonomy" id="3702"/>
    <lineage>
        <taxon>Eukaryota</taxon>
        <taxon>Viridiplantae</taxon>
        <taxon>Streptophyta</taxon>
        <taxon>Embryophyta</taxon>
        <taxon>Tracheophyta</taxon>
        <taxon>Spermatophyta</taxon>
        <taxon>Magnoliopsida</taxon>
        <taxon>eudicotyledons</taxon>
        <taxon>Gunneridae</taxon>
        <taxon>Pentapetalae</taxon>
        <taxon>rosids</taxon>
        <taxon>malvids</taxon>
        <taxon>Brassicales</taxon>
        <taxon>Brassicaceae</taxon>
        <taxon>Camelineae</taxon>
        <taxon>Arabidopsis</taxon>
    </lineage>
</organism>
<accession>O22208</accession>
<accession>Q8L7E7</accession>
<feature type="chain" id="PRO_0000431971" description="bZIP transcription factor 17">
    <location>
        <begin position="1"/>
        <end position="721"/>
    </location>
</feature>
<feature type="topological domain" description="Cytoplasmic" evidence="1">
    <location>
        <begin position="1"/>
        <end position="366"/>
    </location>
</feature>
<feature type="transmembrane region" description="Helical" evidence="2">
    <location>
        <begin position="367"/>
        <end position="387"/>
    </location>
</feature>
<feature type="topological domain" description="Lumenal" evidence="1">
    <location>
        <begin position="388"/>
        <end position="721"/>
    </location>
</feature>
<feature type="domain" description="bZIP" evidence="4">
    <location>
        <begin position="228"/>
        <end position="288"/>
    </location>
</feature>
<feature type="region of interest" description="Disordered" evidence="5">
    <location>
        <begin position="1"/>
        <end position="51"/>
    </location>
</feature>
<feature type="region of interest" description="Disordered" evidence="5">
    <location>
        <begin position="87"/>
        <end position="232"/>
    </location>
</feature>
<feature type="region of interest" description="Basic motif" evidence="4">
    <location>
        <begin position="230"/>
        <end position="261"/>
    </location>
</feature>
<feature type="region of interest" description="Leucine-zipper" evidence="4">
    <location>
        <begin position="267"/>
        <end position="274"/>
    </location>
</feature>
<feature type="region of interest" description="Disordered" evidence="5">
    <location>
        <begin position="337"/>
        <end position="359"/>
    </location>
</feature>
<feature type="region of interest" description="Disordered" evidence="5">
    <location>
        <begin position="422"/>
        <end position="462"/>
    </location>
</feature>
<feature type="short sequence motif" description="RRIL cleavage motif" evidence="11">
    <location>
        <begin position="627"/>
        <end position="630"/>
    </location>
</feature>
<feature type="compositionally biased region" description="Pro residues" evidence="5">
    <location>
        <begin position="9"/>
        <end position="25"/>
    </location>
</feature>
<feature type="compositionally biased region" description="Basic and acidic residues" evidence="5">
    <location>
        <begin position="125"/>
        <end position="141"/>
    </location>
</feature>
<feature type="compositionally biased region" description="Polar residues" evidence="5">
    <location>
        <begin position="146"/>
        <end position="170"/>
    </location>
</feature>
<feature type="compositionally biased region" description="Basic and acidic residues" evidence="5">
    <location>
        <begin position="204"/>
        <end position="216"/>
    </location>
</feature>
<feature type="compositionally biased region" description="Polar residues" evidence="5">
    <location>
        <begin position="422"/>
        <end position="436"/>
    </location>
</feature>
<feature type="compositionally biased region" description="Polar residues" evidence="5">
    <location>
        <begin position="451"/>
        <end position="462"/>
    </location>
</feature>
<feature type="glycosylation site" description="N-linked (GlcNAc...) asparagine" evidence="3">
    <location>
        <position position="450"/>
    </location>
</feature>
<feature type="glycosylation site" description="N-linked (GlcNAc...) asparagine" evidence="3">
    <location>
        <position position="462"/>
    </location>
</feature>
<feature type="glycosylation site" description="N-linked (GlcNAc...) asparagine" evidence="3">
    <location>
        <position position="609"/>
    </location>
</feature>
<feature type="glycosylation site" description="N-linked (GlcNAc...) asparagine" evidence="3">
    <location>
        <position position="617"/>
    </location>
</feature>
<feature type="glycosylation site" description="N-linked (GlcNAc...) asparagine" evidence="3">
    <location>
        <position position="643"/>
    </location>
</feature>
<feature type="glycosylation site" description="N-linked (GlcNAc...) asparagine" evidence="3">
    <location>
        <position position="651"/>
    </location>
</feature>
<feature type="sequence conflict" description="In Ref. 3; AAM96961/AAN15727." evidence="10" ref="3">
    <original>I</original>
    <variation>V</variation>
    <location>
        <position position="487"/>
    </location>
</feature>
<gene>
    <name evidence="9" type="primary">BZIP17</name>
    <name evidence="13" type="ordered locus">At2g40950</name>
</gene>
<reference key="1">
    <citation type="journal article" date="1999" name="Nature">
        <title>Sequence and analysis of chromosome 2 of the plant Arabidopsis thaliana.</title>
        <authorList>
            <person name="Lin X."/>
            <person name="Kaul S."/>
            <person name="Rounsley S.D."/>
            <person name="Shea T.P."/>
            <person name="Benito M.-I."/>
            <person name="Town C.D."/>
            <person name="Fujii C.Y."/>
            <person name="Mason T.M."/>
            <person name="Bowman C.L."/>
            <person name="Barnstead M.E."/>
            <person name="Feldblyum T.V."/>
            <person name="Buell C.R."/>
            <person name="Ketchum K.A."/>
            <person name="Lee J.J."/>
            <person name="Ronning C.M."/>
            <person name="Koo H.L."/>
            <person name="Moffat K.S."/>
            <person name="Cronin L.A."/>
            <person name="Shen M."/>
            <person name="Pai G."/>
            <person name="Van Aken S."/>
            <person name="Umayam L."/>
            <person name="Tallon L.J."/>
            <person name="Gill J.E."/>
            <person name="Adams M.D."/>
            <person name="Carrera A.J."/>
            <person name="Creasy T.H."/>
            <person name="Goodman H.M."/>
            <person name="Somerville C.R."/>
            <person name="Copenhaver G.P."/>
            <person name="Preuss D."/>
            <person name="Nierman W.C."/>
            <person name="White O."/>
            <person name="Eisen J.A."/>
            <person name="Salzberg S.L."/>
            <person name="Fraser C.M."/>
            <person name="Venter J.C."/>
        </authorList>
    </citation>
    <scope>NUCLEOTIDE SEQUENCE [LARGE SCALE GENOMIC DNA]</scope>
    <source>
        <strain>cv. Columbia</strain>
    </source>
</reference>
<reference key="2">
    <citation type="journal article" date="2017" name="Plant J.">
        <title>Araport11: a complete reannotation of the Arabidopsis thaliana reference genome.</title>
        <authorList>
            <person name="Cheng C.Y."/>
            <person name="Krishnakumar V."/>
            <person name="Chan A.P."/>
            <person name="Thibaud-Nissen F."/>
            <person name="Schobel S."/>
            <person name="Town C.D."/>
        </authorList>
    </citation>
    <scope>GENOME REANNOTATION</scope>
    <source>
        <strain>cv. Columbia</strain>
    </source>
</reference>
<reference key="3">
    <citation type="journal article" date="2003" name="Science">
        <title>Empirical analysis of transcriptional activity in the Arabidopsis genome.</title>
        <authorList>
            <person name="Yamada K."/>
            <person name="Lim J."/>
            <person name="Dale J.M."/>
            <person name="Chen H."/>
            <person name="Shinn P."/>
            <person name="Palm C.J."/>
            <person name="Southwick A.M."/>
            <person name="Wu H.C."/>
            <person name="Kim C.J."/>
            <person name="Nguyen M."/>
            <person name="Pham P.K."/>
            <person name="Cheuk R.F."/>
            <person name="Karlin-Newmann G."/>
            <person name="Liu S.X."/>
            <person name="Lam B."/>
            <person name="Sakano H."/>
            <person name="Wu T."/>
            <person name="Yu G."/>
            <person name="Miranda M."/>
            <person name="Quach H.L."/>
            <person name="Tripp M."/>
            <person name="Chang C.H."/>
            <person name="Lee J.M."/>
            <person name="Toriumi M.J."/>
            <person name="Chan M.M."/>
            <person name="Tang C.C."/>
            <person name="Onodera C.S."/>
            <person name="Deng J.M."/>
            <person name="Akiyama K."/>
            <person name="Ansari Y."/>
            <person name="Arakawa T."/>
            <person name="Banh J."/>
            <person name="Banno F."/>
            <person name="Bowser L."/>
            <person name="Brooks S.Y."/>
            <person name="Carninci P."/>
            <person name="Chao Q."/>
            <person name="Choy N."/>
            <person name="Enju A."/>
            <person name="Goldsmith A.D."/>
            <person name="Gurjal M."/>
            <person name="Hansen N.F."/>
            <person name="Hayashizaki Y."/>
            <person name="Johnson-Hopson C."/>
            <person name="Hsuan V.W."/>
            <person name="Iida K."/>
            <person name="Karnes M."/>
            <person name="Khan S."/>
            <person name="Koesema E."/>
            <person name="Ishida J."/>
            <person name="Jiang P.X."/>
            <person name="Jones T."/>
            <person name="Kawai J."/>
            <person name="Kamiya A."/>
            <person name="Meyers C."/>
            <person name="Nakajima M."/>
            <person name="Narusaka M."/>
            <person name="Seki M."/>
            <person name="Sakurai T."/>
            <person name="Satou M."/>
            <person name="Tamse R."/>
            <person name="Vaysberg M."/>
            <person name="Wallender E.K."/>
            <person name="Wong C."/>
            <person name="Yamamura Y."/>
            <person name="Yuan S."/>
            <person name="Shinozaki K."/>
            <person name="Davis R.W."/>
            <person name="Theologis A."/>
            <person name="Ecker J.R."/>
        </authorList>
    </citation>
    <scope>NUCLEOTIDE SEQUENCE [LARGE SCALE MRNA]</scope>
    <source>
        <strain>cv. Columbia</strain>
    </source>
</reference>
<reference key="4">
    <citation type="journal article" date="2002" name="Trends Plant Sci.">
        <title>bZIP transcription factors in Arabidopsis.</title>
        <authorList>
            <person name="Jakoby M."/>
            <person name="Weisshaar B."/>
            <person name="Droege-Laser W."/>
            <person name="Vicente-Carbajosa J."/>
            <person name="Tiedemann J."/>
            <person name="Kroj T."/>
            <person name="Parcy F."/>
        </authorList>
    </citation>
    <scope>GENE FAMILY</scope>
    <scope>NOMENCLATURE</scope>
</reference>
<reference key="5">
    <citation type="journal article" date="2007" name="Plant J.">
        <title>Salt stress responses in Arabidopsis utilize a signal transduction pathway related to endoplasmic reticulum stress signaling.</title>
        <authorList>
            <person name="Liu J.X."/>
            <person name="Srivastava R."/>
            <person name="Che P."/>
            <person name="Howell S.H."/>
        </authorList>
    </citation>
    <scope>FUNCTION</scope>
    <scope>SUBCELLULAR LOCATION</scope>
    <scope>CLEAVAGE BY SBT6.1</scope>
    <scope>DISRUPTION PHENOTYPE</scope>
</reference>
<reference key="6">
    <citation type="journal article" date="2010" name="Plant Cell">
        <title>bZIP28 and NF-Y transcription factors are activated by ER stress and assemble into a transcriptional complex to regulate stress response genes in Arabidopsis.</title>
        <authorList>
            <person name="Liu J.X."/>
            <person name="Howell S.H."/>
        </authorList>
    </citation>
    <scope>INTERACTION WITH BZIP28</scope>
</reference>
<reference key="7">
    <citation type="journal article" date="2010" name="Sci. Signal.">
        <title>Signaling from the endoplasmic reticulum activates brassinosteroid signaling and promotes acclimation to stress in Arabidopsis.</title>
        <authorList>
            <person name="Che P."/>
            <person name="Bussell J.D."/>
            <person name="Zhou W."/>
            <person name="Estavillo G.M."/>
            <person name="Pogson B.J."/>
            <person name="Smith S.M."/>
        </authorList>
    </citation>
    <scope>FUNCTION</scope>
    <scope>SUBCELLULAR LOCATION</scope>
</reference>
<evidence type="ECO:0000250" key="1">
    <source>
        <dbReference type="UniProtKB" id="Q9SG86"/>
    </source>
</evidence>
<evidence type="ECO:0000255" key="2"/>
<evidence type="ECO:0000255" key="3">
    <source>
        <dbReference type="PROSITE-ProRule" id="PRU00498"/>
    </source>
</evidence>
<evidence type="ECO:0000255" key="4">
    <source>
        <dbReference type="PROSITE-ProRule" id="PRU00978"/>
    </source>
</evidence>
<evidence type="ECO:0000256" key="5">
    <source>
        <dbReference type="SAM" id="MobiDB-lite"/>
    </source>
</evidence>
<evidence type="ECO:0000269" key="6">
    <source>
    </source>
</evidence>
<evidence type="ECO:0000269" key="7">
    <source>
    </source>
</evidence>
<evidence type="ECO:0000269" key="8">
    <source>
    </source>
</evidence>
<evidence type="ECO:0000303" key="9">
    <source>
    </source>
</evidence>
<evidence type="ECO:0000305" key="10"/>
<evidence type="ECO:0000305" key="11">
    <source>
    </source>
</evidence>
<evidence type="ECO:0000305" key="12">
    <source>
    </source>
</evidence>
<evidence type="ECO:0000312" key="13">
    <source>
        <dbReference type="Araport" id="AT2G40950"/>
    </source>
</evidence>